<proteinExistence type="inferred from homology"/>
<gene>
    <name type="primary">UTP25</name>
    <name type="ordered locus">CAALFM_CR06840WA</name>
    <name type="ORF">CaO19.1849</name>
    <name type="ORF">CaO19.9407</name>
</gene>
<accession>Q59MU1</accession>
<accession>A0A1D8PTB0</accession>
<protein>
    <recommendedName>
        <fullName>U3 small nucleolar RNA-associated protein 25</fullName>
        <shortName>U3 snoRNA-associated protein 25</shortName>
    </recommendedName>
    <alternativeName>
        <fullName>U three protein 25</fullName>
    </alternativeName>
</protein>
<evidence type="ECO:0000250" key="1"/>
<evidence type="ECO:0000256" key="2">
    <source>
        <dbReference type="SAM" id="MobiDB-lite"/>
    </source>
</evidence>
<evidence type="ECO:0000305" key="3"/>
<reference key="1">
    <citation type="journal article" date="2004" name="Proc. Natl. Acad. Sci. U.S.A.">
        <title>The diploid genome sequence of Candida albicans.</title>
        <authorList>
            <person name="Jones T."/>
            <person name="Federspiel N.A."/>
            <person name="Chibana H."/>
            <person name="Dungan J."/>
            <person name="Kalman S."/>
            <person name="Magee B.B."/>
            <person name="Newport G."/>
            <person name="Thorstenson Y.R."/>
            <person name="Agabian N."/>
            <person name="Magee P.T."/>
            <person name="Davis R.W."/>
            <person name="Scherer S."/>
        </authorList>
    </citation>
    <scope>NUCLEOTIDE SEQUENCE [LARGE SCALE GENOMIC DNA]</scope>
    <source>
        <strain>SC5314 / ATCC MYA-2876</strain>
    </source>
</reference>
<reference key="2">
    <citation type="journal article" date="2007" name="Genome Biol.">
        <title>Assembly of the Candida albicans genome into sixteen supercontigs aligned on the eight chromosomes.</title>
        <authorList>
            <person name="van het Hoog M."/>
            <person name="Rast T.J."/>
            <person name="Martchenko M."/>
            <person name="Grindle S."/>
            <person name="Dignard D."/>
            <person name="Hogues H."/>
            <person name="Cuomo C."/>
            <person name="Berriman M."/>
            <person name="Scherer S."/>
            <person name="Magee B.B."/>
            <person name="Whiteway M."/>
            <person name="Chibana H."/>
            <person name="Nantel A."/>
            <person name="Magee P.T."/>
        </authorList>
    </citation>
    <scope>GENOME REANNOTATION</scope>
    <source>
        <strain>SC5314 / ATCC MYA-2876</strain>
    </source>
</reference>
<reference key="3">
    <citation type="journal article" date="2013" name="Genome Biol.">
        <title>Assembly of a phased diploid Candida albicans genome facilitates allele-specific measurements and provides a simple model for repeat and indel structure.</title>
        <authorList>
            <person name="Muzzey D."/>
            <person name="Schwartz K."/>
            <person name="Weissman J.S."/>
            <person name="Sherlock G."/>
        </authorList>
    </citation>
    <scope>NUCLEOTIDE SEQUENCE [LARGE SCALE GENOMIC DNA]</scope>
    <scope>GENOME REANNOTATION</scope>
    <source>
        <strain>SC5314 / ATCC MYA-2876</strain>
    </source>
</reference>
<comment type="function">
    <text evidence="1">DEAD-box RNA helicase-like protein required for pre-18S rRNA processing, specifically at sites A0, A1, and A2.</text>
</comment>
<comment type="subunit">
    <text evidence="1">Component of the ribosomal small subunit (SSU) processome composed of at least 40 protein subunits and snoRNA U3.</text>
</comment>
<comment type="subcellular location">
    <subcellularLocation>
        <location evidence="1">Nucleus</location>
        <location evidence="1">Nucleolus</location>
    </subcellularLocation>
</comment>
<comment type="similarity">
    <text evidence="3">Belongs to the UTP25 family.</text>
</comment>
<keyword id="KW-0539">Nucleus</keyword>
<keyword id="KW-1185">Reference proteome</keyword>
<keyword id="KW-0687">Ribonucleoprotein</keyword>
<keyword id="KW-0690">Ribosome biogenesis</keyword>
<keyword id="KW-0698">rRNA processing</keyword>
<organism>
    <name type="scientific">Candida albicans (strain SC5314 / ATCC MYA-2876)</name>
    <name type="common">Yeast</name>
    <dbReference type="NCBI Taxonomy" id="237561"/>
    <lineage>
        <taxon>Eukaryota</taxon>
        <taxon>Fungi</taxon>
        <taxon>Dikarya</taxon>
        <taxon>Ascomycota</taxon>
        <taxon>Saccharomycotina</taxon>
        <taxon>Pichiomycetes</taxon>
        <taxon>Debaryomycetaceae</taxon>
        <taxon>Candida/Lodderomyces clade</taxon>
        <taxon>Candida</taxon>
    </lineage>
</organism>
<dbReference type="EMBL" id="CP017630">
    <property type="protein sequence ID" value="AOW31381.1"/>
    <property type="molecule type" value="Genomic_DNA"/>
</dbReference>
<dbReference type="RefSeq" id="XP_711078.2">
    <property type="nucleotide sequence ID" value="XM_705986.2"/>
</dbReference>
<dbReference type="SMR" id="Q59MU1"/>
<dbReference type="FunCoup" id="Q59MU1">
    <property type="interactions" value="1317"/>
</dbReference>
<dbReference type="STRING" id="237561.Q59MU1"/>
<dbReference type="EnsemblFungi" id="CR_06840W_A-T">
    <property type="protein sequence ID" value="CR_06840W_A-T-p1"/>
    <property type="gene ID" value="CR_06840W_A"/>
</dbReference>
<dbReference type="GeneID" id="3647322"/>
<dbReference type="KEGG" id="cal:CAALFM_CR06840WA"/>
<dbReference type="CGD" id="CAL0000179907">
    <property type="gene designation" value="orf19.9407"/>
</dbReference>
<dbReference type="VEuPathDB" id="FungiDB:CR_06840W_A"/>
<dbReference type="eggNOG" id="KOG2340">
    <property type="taxonomic scope" value="Eukaryota"/>
</dbReference>
<dbReference type="HOGENOM" id="CLU_018705_0_1_1"/>
<dbReference type="InParanoid" id="Q59MU1"/>
<dbReference type="OrthoDB" id="10264378at2759"/>
<dbReference type="PRO" id="PR:Q59MU1"/>
<dbReference type="Proteomes" id="UP000000559">
    <property type="component" value="Chromosome R"/>
</dbReference>
<dbReference type="GO" id="GO:0005730">
    <property type="term" value="C:nucleolus"/>
    <property type="evidence" value="ECO:0000318"/>
    <property type="project" value="GO_Central"/>
</dbReference>
<dbReference type="GO" id="GO:0032040">
    <property type="term" value="C:small-subunit processome"/>
    <property type="evidence" value="ECO:0000318"/>
    <property type="project" value="GO_Central"/>
</dbReference>
<dbReference type="GO" id="GO:0019843">
    <property type="term" value="F:rRNA binding"/>
    <property type="evidence" value="ECO:0000318"/>
    <property type="project" value="GO_Central"/>
</dbReference>
<dbReference type="GO" id="GO:0034511">
    <property type="term" value="F:U3 snoRNA binding"/>
    <property type="evidence" value="ECO:0000318"/>
    <property type="project" value="GO_Central"/>
</dbReference>
<dbReference type="GO" id="GO:0000462">
    <property type="term" value="P:maturation of SSU-rRNA from tricistronic rRNA transcript (SSU-rRNA, 5.8S rRNA, LSU-rRNA)"/>
    <property type="evidence" value="ECO:0000318"/>
    <property type="project" value="GO_Central"/>
</dbReference>
<dbReference type="FunFam" id="3.40.50.300:FF:002072">
    <property type="entry name" value="U3 small nucleolar RNA-associated protein 25"/>
    <property type="match status" value="1"/>
</dbReference>
<dbReference type="Gene3D" id="3.40.50.300">
    <property type="entry name" value="P-loop containing nucleotide triphosphate hydrolases"/>
    <property type="match status" value="1"/>
</dbReference>
<dbReference type="InterPro" id="IPR027417">
    <property type="entry name" value="P-loop_NTPase"/>
</dbReference>
<dbReference type="InterPro" id="IPR010678">
    <property type="entry name" value="UTP25"/>
</dbReference>
<dbReference type="InterPro" id="IPR053939">
    <property type="entry name" value="UTP25_C"/>
</dbReference>
<dbReference type="InterPro" id="IPR053940">
    <property type="entry name" value="UTP25_NTPase-like"/>
</dbReference>
<dbReference type="PANTHER" id="PTHR12933">
    <property type="entry name" value="ORF PROTEIN-RELATED"/>
    <property type="match status" value="1"/>
</dbReference>
<dbReference type="PANTHER" id="PTHR12933:SF0">
    <property type="entry name" value="U3 SMALL NUCLEOLAR RNA-ASSOCIATED PROTEIN 25 HOMOLOG"/>
    <property type="match status" value="1"/>
</dbReference>
<dbReference type="Pfam" id="PF06862">
    <property type="entry name" value="Utp25_C"/>
    <property type="match status" value="1"/>
</dbReference>
<dbReference type="Pfam" id="PF22916">
    <property type="entry name" value="UTP25_NTPase-like"/>
    <property type="match status" value="1"/>
</dbReference>
<feature type="chain" id="PRO_0000408107" description="U3 small nucleolar RNA-associated protein 25">
    <location>
        <begin position="1"/>
        <end position="716"/>
    </location>
</feature>
<feature type="region of interest" description="Disordered" evidence="2">
    <location>
        <begin position="1"/>
        <end position="167"/>
    </location>
</feature>
<feature type="compositionally biased region" description="Basic and acidic residues" evidence="2">
    <location>
        <begin position="15"/>
        <end position="26"/>
    </location>
</feature>
<feature type="compositionally biased region" description="Acidic residues" evidence="2">
    <location>
        <begin position="50"/>
        <end position="69"/>
    </location>
</feature>
<feature type="compositionally biased region" description="Acidic residues" evidence="2">
    <location>
        <begin position="110"/>
        <end position="150"/>
    </location>
</feature>
<name>UTP25_CANAL</name>
<sequence length="716" mass="82950">MAKQFKRKSNGVSESNRKRGRQELRKVTRTAARKQQQDENHEDDLNVNNDSEEDNSGKEIDEEDEEGERDDNRGKAYSALLTLLKSEHKEKPKNVTFGSSSQVEKANASDSEDDGIAGANVDEEEEEGEIDNNVDENEIVSESDDDDDEDATNRLSTDPFESHFNLPSDDYLAKEEKLVLKDNEKWRTVDKQTYSDLAISSLVQLPPGEPLNPPLLKSSKLSEYTIKKRVLDSYEQAYGTGLSDLESTLINPILNYRDVNFQYKSFKNKFYRRLYTLHALNHIFKTRDRILKNTAKLHAAKEDSEELELRDQGFTRPKVLIMLPTRDACYEVVEQLIKLSGTEQQENKKKFNDQFYVKATPPATKPEDFRDAFKGNNNDFFCIGLKFTRKSLKLYSSFYSSDIILASPIGLSMILENPDKKKRQYDFLSSIEVLIVDKCNQIEMQNWDHVNTVMKYLNKVPKEFHDADFSRIRMWSINDQAKLLRQTLVFCEYLTPSINNLISSKSYNLSGKVKFKPIINSENSMMNSIGLKIKQIFQRFDSQSPLQDPDSRYKYFINAILPSLLKTSSYEDGIMIFIPSYFDYLRVKNYLKTSTKFTFGSIDEYSSQSKLTKTRQEFASGKIKLLLYTERLHYFRRYEISGVKTLIMYGLPSNPLFYKELIRFIGKSVFKEECDLDLALVKILFSKWDAVNLEKIVGNERAPVLCNSMNELYEFR</sequence>